<organism>
    <name type="scientific">Chlorobium limicola (strain DSM 245 / NBRC 103803 / 6330)</name>
    <dbReference type="NCBI Taxonomy" id="290315"/>
    <lineage>
        <taxon>Bacteria</taxon>
        <taxon>Pseudomonadati</taxon>
        <taxon>Chlorobiota</taxon>
        <taxon>Chlorobiia</taxon>
        <taxon>Chlorobiales</taxon>
        <taxon>Chlorobiaceae</taxon>
        <taxon>Chlorobium/Pelodictyon group</taxon>
        <taxon>Chlorobium</taxon>
    </lineage>
</organism>
<feature type="chain" id="PRO_1000093661" description="Thiamine-phosphate synthase">
    <location>
        <begin position="1"/>
        <end position="210"/>
    </location>
</feature>
<feature type="binding site" evidence="1">
    <location>
        <begin position="34"/>
        <end position="38"/>
    </location>
    <ligand>
        <name>4-amino-2-methyl-5-(diphosphooxymethyl)pyrimidine</name>
        <dbReference type="ChEBI" id="CHEBI:57841"/>
    </ligand>
</feature>
<feature type="binding site" evidence="1">
    <location>
        <position position="66"/>
    </location>
    <ligand>
        <name>4-amino-2-methyl-5-(diphosphooxymethyl)pyrimidine</name>
        <dbReference type="ChEBI" id="CHEBI:57841"/>
    </ligand>
</feature>
<feature type="binding site" evidence="1">
    <location>
        <position position="67"/>
    </location>
    <ligand>
        <name>Mg(2+)</name>
        <dbReference type="ChEBI" id="CHEBI:18420"/>
    </ligand>
</feature>
<feature type="binding site" evidence="1">
    <location>
        <position position="86"/>
    </location>
    <ligand>
        <name>Mg(2+)</name>
        <dbReference type="ChEBI" id="CHEBI:18420"/>
    </ligand>
</feature>
<feature type="binding site" evidence="1">
    <location>
        <position position="105"/>
    </location>
    <ligand>
        <name>4-amino-2-methyl-5-(diphosphooxymethyl)pyrimidine</name>
        <dbReference type="ChEBI" id="CHEBI:57841"/>
    </ligand>
</feature>
<feature type="binding site" evidence="1">
    <location>
        <begin position="131"/>
        <end position="133"/>
    </location>
    <ligand>
        <name>2-[(2R,5Z)-2-carboxy-4-methylthiazol-5(2H)-ylidene]ethyl phosphate</name>
        <dbReference type="ChEBI" id="CHEBI:62899"/>
    </ligand>
</feature>
<feature type="binding site" evidence="1">
    <location>
        <position position="134"/>
    </location>
    <ligand>
        <name>4-amino-2-methyl-5-(diphosphooxymethyl)pyrimidine</name>
        <dbReference type="ChEBI" id="CHEBI:57841"/>
    </ligand>
</feature>
<feature type="binding site" evidence="1">
    <location>
        <position position="162"/>
    </location>
    <ligand>
        <name>2-[(2R,5Z)-2-carboxy-4-methylthiazol-5(2H)-ylidene]ethyl phosphate</name>
        <dbReference type="ChEBI" id="CHEBI:62899"/>
    </ligand>
</feature>
<evidence type="ECO:0000255" key="1">
    <source>
        <dbReference type="HAMAP-Rule" id="MF_00097"/>
    </source>
</evidence>
<proteinExistence type="inferred from homology"/>
<keyword id="KW-0460">Magnesium</keyword>
<keyword id="KW-0479">Metal-binding</keyword>
<keyword id="KW-0784">Thiamine biosynthesis</keyword>
<keyword id="KW-0808">Transferase</keyword>
<reference key="1">
    <citation type="submission" date="2008-05" db="EMBL/GenBank/DDBJ databases">
        <title>Complete sequence of Chlorobium limicola DSM 245.</title>
        <authorList>
            <consortium name="US DOE Joint Genome Institute"/>
            <person name="Lucas S."/>
            <person name="Copeland A."/>
            <person name="Lapidus A."/>
            <person name="Glavina del Rio T."/>
            <person name="Dalin E."/>
            <person name="Tice H."/>
            <person name="Bruce D."/>
            <person name="Goodwin L."/>
            <person name="Pitluck S."/>
            <person name="Schmutz J."/>
            <person name="Larimer F."/>
            <person name="Land M."/>
            <person name="Hauser L."/>
            <person name="Kyrpides N."/>
            <person name="Ovchinnikova G."/>
            <person name="Zhao F."/>
            <person name="Li T."/>
            <person name="Liu Z."/>
            <person name="Overmann J."/>
            <person name="Bryant D.A."/>
            <person name="Richardson P."/>
        </authorList>
    </citation>
    <scope>NUCLEOTIDE SEQUENCE [LARGE SCALE GENOMIC DNA]</scope>
    <source>
        <strain>DSM 245 / NBRC 103803 / 6330</strain>
    </source>
</reference>
<gene>
    <name evidence="1" type="primary">thiE</name>
    <name type="ordered locus">Clim_1406</name>
</gene>
<comment type="function">
    <text evidence="1">Condenses 4-methyl-5-(beta-hydroxyethyl)thiazole monophosphate (THZ-P) and 2-methyl-4-amino-5-hydroxymethyl pyrimidine pyrophosphate (HMP-PP) to form thiamine monophosphate (TMP).</text>
</comment>
<comment type="catalytic activity">
    <reaction evidence="1">
        <text>2-[(2R,5Z)-2-carboxy-4-methylthiazol-5(2H)-ylidene]ethyl phosphate + 4-amino-2-methyl-5-(diphosphooxymethyl)pyrimidine + 2 H(+) = thiamine phosphate + CO2 + diphosphate</text>
        <dbReference type="Rhea" id="RHEA:47844"/>
        <dbReference type="ChEBI" id="CHEBI:15378"/>
        <dbReference type="ChEBI" id="CHEBI:16526"/>
        <dbReference type="ChEBI" id="CHEBI:33019"/>
        <dbReference type="ChEBI" id="CHEBI:37575"/>
        <dbReference type="ChEBI" id="CHEBI:57841"/>
        <dbReference type="ChEBI" id="CHEBI:62899"/>
        <dbReference type="EC" id="2.5.1.3"/>
    </reaction>
</comment>
<comment type="catalytic activity">
    <reaction evidence="1">
        <text>2-(2-carboxy-4-methylthiazol-5-yl)ethyl phosphate + 4-amino-2-methyl-5-(diphosphooxymethyl)pyrimidine + 2 H(+) = thiamine phosphate + CO2 + diphosphate</text>
        <dbReference type="Rhea" id="RHEA:47848"/>
        <dbReference type="ChEBI" id="CHEBI:15378"/>
        <dbReference type="ChEBI" id="CHEBI:16526"/>
        <dbReference type="ChEBI" id="CHEBI:33019"/>
        <dbReference type="ChEBI" id="CHEBI:37575"/>
        <dbReference type="ChEBI" id="CHEBI:57841"/>
        <dbReference type="ChEBI" id="CHEBI:62890"/>
        <dbReference type="EC" id="2.5.1.3"/>
    </reaction>
</comment>
<comment type="catalytic activity">
    <reaction evidence="1">
        <text>4-methyl-5-(2-phosphooxyethyl)-thiazole + 4-amino-2-methyl-5-(diphosphooxymethyl)pyrimidine + H(+) = thiamine phosphate + diphosphate</text>
        <dbReference type="Rhea" id="RHEA:22328"/>
        <dbReference type="ChEBI" id="CHEBI:15378"/>
        <dbReference type="ChEBI" id="CHEBI:33019"/>
        <dbReference type="ChEBI" id="CHEBI:37575"/>
        <dbReference type="ChEBI" id="CHEBI:57841"/>
        <dbReference type="ChEBI" id="CHEBI:58296"/>
        <dbReference type="EC" id="2.5.1.3"/>
    </reaction>
</comment>
<comment type="cofactor">
    <cofactor evidence="1">
        <name>Mg(2+)</name>
        <dbReference type="ChEBI" id="CHEBI:18420"/>
    </cofactor>
    <text evidence="1">Binds 1 Mg(2+) ion per subunit.</text>
</comment>
<comment type="pathway">
    <text evidence="1">Cofactor biosynthesis; thiamine diphosphate biosynthesis; thiamine phosphate from 4-amino-2-methyl-5-diphosphomethylpyrimidine and 4-methyl-5-(2-phosphoethyl)-thiazole: step 1/1.</text>
</comment>
<comment type="similarity">
    <text evidence="1">Belongs to the thiamine-phosphate synthase family.</text>
</comment>
<sequence>MIPSSPFLCFITDESRSPIILARKALEGGASMIQLRHKSADGDQLYHWSVAIQALCRKHKAIFIVNDRVDIALAAGADGVHLGQQDLPADAARKLLGKDRIMGISVSSPLEALAAEKNGADYVGFGHIFPTSSKDKKNTPVGPESIADIKAIITIPIIAIGGITGCNAQLPIRAGAAGIAVIAAVSRAADPEIAARELVGILQKNIEHNR</sequence>
<dbReference type="EC" id="2.5.1.3" evidence="1"/>
<dbReference type="EMBL" id="CP001097">
    <property type="protein sequence ID" value="ACD90466.1"/>
    <property type="molecule type" value="Genomic_DNA"/>
</dbReference>
<dbReference type="RefSeq" id="WP_012466343.1">
    <property type="nucleotide sequence ID" value="NC_010803.1"/>
</dbReference>
<dbReference type="SMR" id="B3ED41"/>
<dbReference type="STRING" id="290315.Clim_1406"/>
<dbReference type="KEGG" id="cli:Clim_1406"/>
<dbReference type="eggNOG" id="COG0352">
    <property type="taxonomic scope" value="Bacteria"/>
</dbReference>
<dbReference type="HOGENOM" id="CLU_018272_3_4_10"/>
<dbReference type="OrthoDB" id="9812206at2"/>
<dbReference type="UniPathway" id="UPA00060">
    <property type="reaction ID" value="UER00141"/>
</dbReference>
<dbReference type="Proteomes" id="UP000008841">
    <property type="component" value="Chromosome"/>
</dbReference>
<dbReference type="GO" id="GO:0005737">
    <property type="term" value="C:cytoplasm"/>
    <property type="evidence" value="ECO:0007669"/>
    <property type="project" value="TreeGrafter"/>
</dbReference>
<dbReference type="GO" id="GO:0000287">
    <property type="term" value="F:magnesium ion binding"/>
    <property type="evidence" value="ECO:0007669"/>
    <property type="project" value="UniProtKB-UniRule"/>
</dbReference>
<dbReference type="GO" id="GO:0004789">
    <property type="term" value="F:thiamine-phosphate diphosphorylase activity"/>
    <property type="evidence" value="ECO:0007669"/>
    <property type="project" value="UniProtKB-UniRule"/>
</dbReference>
<dbReference type="GO" id="GO:0009228">
    <property type="term" value="P:thiamine biosynthetic process"/>
    <property type="evidence" value="ECO:0007669"/>
    <property type="project" value="UniProtKB-KW"/>
</dbReference>
<dbReference type="GO" id="GO:0009229">
    <property type="term" value="P:thiamine diphosphate biosynthetic process"/>
    <property type="evidence" value="ECO:0007669"/>
    <property type="project" value="UniProtKB-UniRule"/>
</dbReference>
<dbReference type="CDD" id="cd00564">
    <property type="entry name" value="TMP_TenI"/>
    <property type="match status" value="1"/>
</dbReference>
<dbReference type="FunFam" id="3.20.20.70:FF:000096">
    <property type="entry name" value="Thiamine-phosphate synthase"/>
    <property type="match status" value="1"/>
</dbReference>
<dbReference type="Gene3D" id="3.20.20.70">
    <property type="entry name" value="Aldolase class I"/>
    <property type="match status" value="1"/>
</dbReference>
<dbReference type="HAMAP" id="MF_00097">
    <property type="entry name" value="TMP_synthase"/>
    <property type="match status" value="1"/>
</dbReference>
<dbReference type="InterPro" id="IPR013785">
    <property type="entry name" value="Aldolase_TIM"/>
</dbReference>
<dbReference type="InterPro" id="IPR036206">
    <property type="entry name" value="ThiamineP_synth_sf"/>
</dbReference>
<dbReference type="InterPro" id="IPR022998">
    <property type="entry name" value="ThiamineP_synth_TenI"/>
</dbReference>
<dbReference type="InterPro" id="IPR034291">
    <property type="entry name" value="TMP_synthase"/>
</dbReference>
<dbReference type="NCBIfam" id="TIGR00693">
    <property type="entry name" value="thiE"/>
    <property type="match status" value="1"/>
</dbReference>
<dbReference type="PANTHER" id="PTHR20857:SF23">
    <property type="entry name" value="THIAMINE BIOSYNTHETIC BIFUNCTIONAL ENZYME"/>
    <property type="match status" value="1"/>
</dbReference>
<dbReference type="PANTHER" id="PTHR20857">
    <property type="entry name" value="THIAMINE-PHOSPHATE PYROPHOSPHORYLASE"/>
    <property type="match status" value="1"/>
</dbReference>
<dbReference type="Pfam" id="PF02581">
    <property type="entry name" value="TMP-TENI"/>
    <property type="match status" value="1"/>
</dbReference>
<dbReference type="SUPFAM" id="SSF51391">
    <property type="entry name" value="Thiamin phosphate synthase"/>
    <property type="match status" value="1"/>
</dbReference>
<name>THIE_CHLL2</name>
<protein>
    <recommendedName>
        <fullName evidence="1">Thiamine-phosphate synthase</fullName>
        <shortName evidence="1">TP synthase</shortName>
        <shortName evidence="1">TPS</shortName>
        <ecNumber evidence="1">2.5.1.3</ecNumber>
    </recommendedName>
    <alternativeName>
        <fullName evidence="1">Thiamine-phosphate pyrophosphorylase</fullName>
        <shortName evidence="1">TMP pyrophosphorylase</shortName>
        <shortName evidence="1">TMP-PPase</shortName>
    </alternativeName>
</protein>
<accession>B3ED41</accession>